<reference key="1">
    <citation type="journal article" date="2002" name="J. Mol. Microbiol. Biotechnol.">
        <title>The genome of Methanosarcina mazei: evidence for lateral gene transfer between Bacteria and Archaea.</title>
        <authorList>
            <person name="Deppenmeier U."/>
            <person name="Johann A."/>
            <person name="Hartsch T."/>
            <person name="Merkl R."/>
            <person name="Schmitz R.A."/>
            <person name="Martinez-Arias R."/>
            <person name="Henne A."/>
            <person name="Wiezer A."/>
            <person name="Baeumer S."/>
            <person name="Jacobi C."/>
            <person name="Brueggemann H."/>
            <person name="Lienard T."/>
            <person name="Christmann A."/>
            <person name="Boemecke M."/>
            <person name="Steckel S."/>
            <person name="Bhattacharyya A."/>
            <person name="Lykidis A."/>
            <person name="Overbeek R."/>
            <person name="Klenk H.-P."/>
            <person name="Gunsalus R.P."/>
            <person name="Fritz H.-J."/>
            <person name="Gottschalk G."/>
        </authorList>
    </citation>
    <scope>NUCLEOTIDE SEQUENCE [LARGE SCALE GENOMIC DNA]</scope>
    <source>
        <strain>ATCC BAA-159 / DSM 3647 / Goe1 / Go1 / JCM 11833 / OCM 88</strain>
    </source>
</reference>
<comment type="function">
    <text evidence="1">Involved in the cellular defense against the biological effects of O6-methylguanine (O6-MeG) and O4-methylthymine (O4-MeT) in DNA. Repairs the methylated nucleobase in DNA by stoichiometrically transferring the methyl group to a cysteine residue in the enzyme. This is a suicide reaction: the enzyme is irreversibly inactivated.</text>
</comment>
<comment type="catalytic activity">
    <reaction evidence="1">
        <text>a 6-O-methyl-2'-deoxyguanosine in DNA + L-cysteinyl-[protein] = S-methyl-L-cysteinyl-[protein] + a 2'-deoxyguanosine in DNA</text>
        <dbReference type="Rhea" id="RHEA:24000"/>
        <dbReference type="Rhea" id="RHEA-COMP:10131"/>
        <dbReference type="Rhea" id="RHEA-COMP:10132"/>
        <dbReference type="Rhea" id="RHEA-COMP:11367"/>
        <dbReference type="Rhea" id="RHEA-COMP:11368"/>
        <dbReference type="ChEBI" id="CHEBI:29950"/>
        <dbReference type="ChEBI" id="CHEBI:82612"/>
        <dbReference type="ChEBI" id="CHEBI:85445"/>
        <dbReference type="ChEBI" id="CHEBI:85448"/>
        <dbReference type="EC" id="2.1.1.63"/>
    </reaction>
</comment>
<comment type="catalytic activity">
    <reaction evidence="1">
        <text>a 4-O-methyl-thymidine in DNA + L-cysteinyl-[protein] = a thymidine in DNA + S-methyl-L-cysteinyl-[protein]</text>
        <dbReference type="Rhea" id="RHEA:53428"/>
        <dbReference type="Rhea" id="RHEA-COMP:10131"/>
        <dbReference type="Rhea" id="RHEA-COMP:10132"/>
        <dbReference type="Rhea" id="RHEA-COMP:13555"/>
        <dbReference type="Rhea" id="RHEA-COMP:13556"/>
        <dbReference type="ChEBI" id="CHEBI:29950"/>
        <dbReference type="ChEBI" id="CHEBI:82612"/>
        <dbReference type="ChEBI" id="CHEBI:137386"/>
        <dbReference type="ChEBI" id="CHEBI:137387"/>
        <dbReference type="EC" id="2.1.1.63"/>
    </reaction>
</comment>
<comment type="subcellular location">
    <subcellularLocation>
        <location evidence="1">Cytoplasm</location>
    </subcellularLocation>
</comment>
<comment type="miscellaneous">
    <text>This enzyme catalyzes only one turnover and therefore is not strictly catalytic. According to one definition, an enzyme is a biocatalyst that acts repeatedly and over many reaction cycles.</text>
</comment>
<comment type="similarity">
    <text evidence="1">Belongs to the MGMT family.</text>
</comment>
<name>OGT_METMA</name>
<proteinExistence type="inferred from homology"/>
<sequence>MYYHIIKSPIYPILLAGDEKGLKHLIFLKDERKAKIPNDWVENKDFFREVSNQLEAYFSGKLKTFDVKLAPQGTEFQKSVWKALCEIPCGETRTYGEIAKRIQNPKAYRAVGLANNRNPIAIIVPCHRVIGANGKLTGYASGLDIKEFLLKLEENNLK</sequence>
<evidence type="ECO:0000255" key="1">
    <source>
        <dbReference type="HAMAP-Rule" id="MF_00772"/>
    </source>
</evidence>
<dbReference type="EC" id="2.1.1.63" evidence="1"/>
<dbReference type="EMBL" id="AE008384">
    <property type="protein sequence ID" value="AAM30716.1"/>
    <property type="molecule type" value="Genomic_DNA"/>
</dbReference>
<dbReference type="RefSeq" id="WP_011032969.1">
    <property type="nucleotide sequence ID" value="NC_003901.1"/>
</dbReference>
<dbReference type="SMR" id="Q8PY44"/>
<dbReference type="KEGG" id="mma:MM_1020"/>
<dbReference type="PATRIC" id="fig|192952.21.peg.1195"/>
<dbReference type="eggNOG" id="arCOG02724">
    <property type="taxonomic scope" value="Archaea"/>
</dbReference>
<dbReference type="HOGENOM" id="CLU_000445_52_2_2"/>
<dbReference type="Proteomes" id="UP000000595">
    <property type="component" value="Chromosome"/>
</dbReference>
<dbReference type="GO" id="GO:0005737">
    <property type="term" value="C:cytoplasm"/>
    <property type="evidence" value="ECO:0007669"/>
    <property type="project" value="UniProtKB-SubCell"/>
</dbReference>
<dbReference type="GO" id="GO:0003908">
    <property type="term" value="F:methylated-DNA-[protein]-cysteine S-methyltransferase activity"/>
    <property type="evidence" value="ECO:0007669"/>
    <property type="project" value="UniProtKB-UniRule"/>
</dbReference>
<dbReference type="GO" id="GO:0006307">
    <property type="term" value="P:DNA alkylation repair"/>
    <property type="evidence" value="ECO:0007669"/>
    <property type="project" value="UniProtKB-UniRule"/>
</dbReference>
<dbReference type="GO" id="GO:0032259">
    <property type="term" value="P:methylation"/>
    <property type="evidence" value="ECO:0007669"/>
    <property type="project" value="UniProtKB-KW"/>
</dbReference>
<dbReference type="CDD" id="cd06445">
    <property type="entry name" value="ATase"/>
    <property type="match status" value="1"/>
</dbReference>
<dbReference type="FunFam" id="1.10.10.10:FF:000214">
    <property type="entry name" value="Methylated-DNA--protein-cysteine methyltransferase"/>
    <property type="match status" value="1"/>
</dbReference>
<dbReference type="Gene3D" id="3.30.160.70">
    <property type="entry name" value="Methylated DNA-protein cysteine methyltransferase domain"/>
    <property type="match status" value="1"/>
</dbReference>
<dbReference type="Gene3D" id="1.10.10.10">
    <property type="entry name" value="Winged helix-like DNA-binding domain superfamily/Winged helix DNA-binding domain"/>
    <property type="match status" value="1"/>
</dbReference>
<dbReference type="HAMAP" id="MF_00772">
    <property type="entry name" value="OGT"/>
    <property type="match status" value="1"/>
</dbReference>
<dbReference type="InterPro" id="IPR001497">
    <property type="entry name" value="MethylDNA_cys_MeTrfase_AS"/>
</dbReference>
<dbReference type="InterPro" id="IPR014048">
    <property type="entry name" value="MethylDNA_cys_MeTrfase_DNA-bd"/>
</dbReference>
<dbReference type="InterPro" id="IPR036217">
    <property type="entry name" value="MethylDNA_cys_MeTrfase_DNAb"/>
</dbReference>
<dbReference type="InterPro" id="IPR008332">
    <property type="entry name" value="MethylG_MeTrfase_N"/>
</dbReference>
<dbReference type="InterPro" id="IPR023546">
    <property type="entry name" value="MGMT"/>
</dbReference>
<dbReference type="InterPro" id="IPR036631">
    <property type="entry name" value="MGMT_N_sf"/>
</dbReference>
<dbReference type="InterPro" id="IPR036388">
    <property type="entry name" value="WH-like_DNA-bd_sf"/>
</dbReference>
<dbReference type="NCBIfam" id="TIGR00589">
    <property type="entry name" value="ogt"/>
    <property type="match status" value="1"/>
</dbReference>
<dbReference type="PANTHER" id="PTHR10815">
    <property type="entry name" value="METHYLATED-DNA--PROTEIN-CYSTEINE METHYLTRANSFERASE"/>
    <property type="match status" value="1"/>
</dbReference>
<dbReference type="PANTHER" id="PTHR10815:SF5">
    <property type="entry name" value="METHYLATED-DNA--PROTEIN-CYSTEINE METHYLTRANSFERASE"/>
    <property type="match status" value="1"/>
</dbReference>
<dbReference type="Pfam" id="PF01035">
    <property type="entry name" value="DNA_binding_1"/>
    <property type="match status" value="1"/>
</dbReference>
<dbReference type="Pfam" id="PF02870">
    <property type="entry name" value="Methyltransf_1N"/>
    <property type="match status" value="1"/>
</dbReference>
<dbReference type="SUPFAM" id="SSF53155">
    <property type="entry name" value="Methylated DNA-protein cysteine methyltransferase domain"/>
    <property type="match status" value="1"/>
</dbReference>
<dbReference type="SUPFAM" id="SSF46767">
    <property type="entry name" value="Methylated DNA-protein cysteine methyltransferase, C-terminal domain"/>
    <property type="match status" value="1"/>
</dbReference>
<dbReference type="PROSITE" id="PS00374">
    <property type="entry name" value="MGMT"/>
    <property type="match status" value="1"/>
</dbReference>
<accession>Q8PY44</accession>
<gene>
    <name evidence="1" type="primary">ogt</name>
    <name type="ordered locus">MM_1020</name>
</gene>
<protein>
    <recommendedName>
        <fullName evidence="1">Methylated-DNA--protein-cysteine methyltransferase</fullName>
        <ecNumber evidence="1">2.1.1.63</ecNumber>
    </recommendedName>
    <alternativeName>
        <fullName evidence="1">6-O-methylguanine-DNA methyltransferase</fullName>
        <shortName evidence="1">MGMT</shortName>
    </alternativeName>
    <alternativeName>
        <fullName evidence="1">O-6-methylguanine-DNA-alkyltransferase</fullName>
    </alternativeName>
</protein>
<feature type="chain" id="PRO_0000139379" description="Methylated-DNA--protein-cysteine methyltransferase">
    <location>
        <begin position="1"/>
        <end position="158"/>
    </location>
</feature>
<feature type="active site" description="Nucleophile; methyl group acceptor" evidence="1">
    <location>
        <position position="126"/>
    </location>
</feature>
<keyword id="KW-0963">Cytoplasm</keyword>
<keyword id="KW-0227">DNA damage</keyword>
<keyword id="KW-0234">DNA repair</keyword>
<keyword id="KW-0489">Methyltransferase</keyword>
<keyword id="KW-0808">Transferase</keyword>
<organism>
    <name type="scientific">Methanosarcina mazei (strain ATCC BAA-159 / DSM 3647 / Goe1 / Go1 / JCM 11833 / OCM 88)</name>
    <name type="common">Methanosarcina frisia</name>
    <dbReference type="NCBI Taxonomy" id="192952"/>
    <lineage>
        <taxon>Archaea</taxon>
        <taxon>Methanobacteriati</taxon>
        <taxon>Methanobacteriota</taxon>
        <taxon>Stenosarchaea group</taxon>
        <taxon>Methanomicrobia</taxon>
        <taxon>Methanosarcinales</taxon>
        <taxon>Methanosarcinaceae</taxon>
        <taxon>Methanosarcina</taxon>
    </lineage>
</organism>